<name>GLGA_NOSP7</name>
<keyword id="KW-0320">Glycogen biosynthesis</keyword>
<keyword id="KW-0328">Glycosyltransferase</keyword>
<keyword id="KW-1185">Reference proteome</keyword>
<keyword id="KW-0808">Transferase</keyword>
<accession>B2J471</accession>
<evidence type="ECO:0000255" key="1">
    <source>
        <dbReference type="HAMAP-Rule" id="MF_00484"/>
    </source>
</evidence>
<proteinExistence type="inferred from homology"/>
<organism>
    <name type="scientific">Nostoc punctiforme (strain ATCC 29133 / PCC 73102)</name>
    <dbReference type="NCBI Taxonomy" id="63737"/>
    <lineage>
        <taxon>Bacteria</taxon>
        <taxon>Bacillati</taxon>
        <taxon>Cyanobacteriota</taxon>
        <taxon>Cyanophyceae</taxon>
        <taxon>Nostocales</taxon>
        <taxon>Nostocaceae</taxon>
        <taxon>Nostoc</taxon>
    </lineage>
</organism>
<sequence length="479" mass="55062">MRILFVAAEAAPIAKVGGMGDVVGALPKFLREMGHDVRIFLPYYGFLPDKMEIPKEPIWRGSAMFQEFAVYESVLPGTDVPLYLFGHPVFLPRRIYSGDDEDWRFTFFSNGAAEFAWNYWKPDIIHCHDWHTGMIPVWMHQDPDITTVFTIHNLAYQGPWRWYLEKITWCPWYMQGHNTMAAAVQFANKVNTVSPTYAEQIKTPAYGETLEGLLSFISGKLSGIINGIDTEVYNPEDDKYIAQTFTTETLDKRKANKIALQEEVGLEVNSKAFLIGIVTRLVEQKGIDLILQILDRFLSYTDAQFVLLGTGDRYYETQMWQLASRFPGRMATYLLYNDALSRRIYAGTDAFLMPSRFEPCGISQMMSLRYGSVPIVRRTGGLVDTVSHHDPENAAGTGYCFDRYEPLDLFTCMIRAWEGFRFKPQWQELQKRGMSEDFSWYKSAKEYVKLYRSIYGLPEEEETPKPELVLNEAVTNSKS</sequence>
<reference key="1">
    <citation type="journal article" date="2013" name="Plant Physiol.">
        <title>A Nostoc punctiforme Sugar Transporter Necessary to Establish a Cyanobacterium-Plant Symbiosis.</title>
        <authorList>
            <person name="Ekman M."/>
            <person name="Picossi S."/>
            <person name="Campbell E.L."/>
            <person name="Meeks J.C."/>
            <person name="Flores E."/>
        </authorList>
    </citation>
    <scope>NUCLEOTIDE SEQUENCE [LARGE SCALE GENOMIC DNA]</scope>
    <source>
        <strain>ATCC 29133 / PCC 73102</strain>
    </source>
</reference>
<protein>
    <recommendedName>
        <fullName evidence="1">Glycogen synthase</fullName>
        <ecNumber evidence="1">2.4.1.21</ecNumber>
    </recommendedName>
    <alternativeName>
        <fullName evidence="1">Starch [bacterial glycogen] synthase</fullName>
    </alternativeName>
</protein>
<feature type="chain" id="PRO_1000126087" description="Glycogen synthase">
    <location>
        <begin position="1"/>
        <end position="479"/>
    </location>
</feature>
<feature type="binding site" evidence="1">
    <location>
        <position position="15"/>
    </location>
    <ligand>
        <name>ADP-alpha-D-glucose</name>
        <dbReference type="ChEBI" id="CHEBI:57498"/>
    </ligand>
</feature>
<dbReference type="EC" id="2.4.1.21" evidence="1"/>
<dbReference type="EMBL" id="CP001037">
    <property type="protein sequence ID" value="ACC82183.1"/>
    <property type="molecule type" value="Genomic_DNA"/>
</dbReference>
<dbReference type="RefSeq" id="WP_012410154.1">
    <property type="nucleotide sequence ID" value="NC_010628.1"/>
</dbReference>
<dbReference type="SMR" id="B2J471"/>
<dbReference type="STRING" id="63737.Npun_F3799"/>
<dbReference type="CAZy" id="GT5">
    <property type="family name" value="Glycosyltransferase Family 5"/>
</dbReference>
<dbReference type="EnsemblBacteria" id="ACC82183">
    <property type="protein sequence ID" value="ACC82183"/>
    <property type="gene ID" value="Npun_F3799"/>
</dbReference>
<dbReference type="KEGG" id="npu:Npun_F3799"/>
<dbReference type="eggNOG" id="COG0297">
    <property type="taxonomic scope" value="Bacteria"/>
</dbReference>
<dbReference type="HOGENOM" id="CLU_009583_18_2_3"/>
<dbReference type="OrthoDB" id="9808590at2"/>
<dbReference type="PhylomeDB" id="B2J471"/>
<dbReference type="UniPathway" id="UPA00164"/>
<dbReference type="Proteomes" id="UP000001191">
    <property type="component" value="Chromosome"/>
</dbReference>
<dbReference type="GO" id="GO:0009011">
    <property type="term" value="F:alpha-1,4-glucan glucosyltransferase (ADP-glucose donor) activity"/>
    <property type="evidence" value="ECO:0007669"/>
    <property type="project" value="UniProtKB-UniRule"/>
</dbReference>
<dbReference type="GO" id="GO:0004373">
    <property type="term" value="F:alpha-1,4-glucan glucosyltransferase (UDP-glucose donor) activity"/>
    <property type="evidence" value="ECO:0007669"/>
    <property type="project" value="InterPro"/>
</dbReference>
<dbReference type="GO" id="GO:0005978">
    <property type="term" value="P:glycogen biosynthetic process"/>
    <property type="evidence" value="ECO:0007669"/>
    <property type="project" value="UniProtKB-UniRule"/>
</dbReference>
<dbReference type="CDD" id="cd03791">
    <property type="entry name" value="GT5_Glycogen_synthase_DULL1-like"/>
    <property type="match status" value="1"/>
</dbReference>
<dbReference type="Gene3D" id="3.40.50.2000">
    <property type="entry name" value="Glycogen Phosphorylase B"/>
    <property type="match status" value="2"/>
</dbReference>
<dbReference type="HAMAP" id="MF_00484">
    <property type="entry name" value="Glycogen_synth"/>
    <property type="match status" value="1"/>
</dbReference>
<dbReference type="InterPro" id="IPR001296">
    <property type="entry name" value="Glyco_trans_1"/>
</dbReference>
<dbReference type="InterPro" id="IPR011835">
    <property type="entry name" value="GS/SS"/>
</dbReference>
<dbReference type="InterPro" id="IPR013534">
    <property type="entry name" value="Starch_synth_cat_dom"/>
</dbReference>
<dbReference type="NCBIfam" id="TIGR02095">
    <property type="entry name" value="glgA"/>
    <property type="match status" value="1"/>
</dbReference>
<dbReference type="NCBIfam" id="NF001900">
    <property type="entry name" value="PRK00654.1-3"/>
    <property type="match status" value="1"/>
</dbReference>
<dbReference type="PANTHER" id="PTHR45825:SF11">
    <property type="entry name" value="ALPHA AMYLASE DOMAIN-CONTAINING PROTEIN"/>
    <property type="match status" value="1"/>
</dbReference>
<dbReference type="PANTHER" id="PTHR45825">
    <property type="entry name" value="GRANULE-BOUND STARCH SYNTHASE 1, CHLOROPLASTIC/AMYLOPLASTIC"/>
    <property type="match status" value="1"/>
</dbReference>
<dbReference type="Pfam" id="PF08323">
    <property type="entry name" value="Glyco_transf_5"/>
    <property type="match status" value="1"/>
</dbReference>
<dbReference type="Pfam" id="PF00534">
    <property type="entry name" value="Glycos_transf_1"/>
    <property type="match status" value="1"/>
</dbReference>
<dbReference type="SUPFAM" id="SSF53756">
    <property type="entry name" value="UDP-Glycosyltransferase/glycogen phosphorylase"/>
    <property type="match status" value="1"/>
</dbReference>
<gene>
    <name evidence="1" type="primary">glgA</name>
    <name type="ordered locus">Npun_F3799</name>
</gene>
<comment type="function">
    <text evidence="1">Synthesizes alpha-1,4-glucan chains using ADP-glucose.</text>
</comment>
<comment type="catalytic activity">
    <reaction evidence="1">
        <text>[(1-&gt;4)-alpha-D-glucosyl](n) + ADP-alpha-D-glucose = [(1-&gt;4)-alpha-D-glucosyl](n+1) + ADP + H(+)</text>
        <dbReference type="Rhea" id="RHEA:18189"/>
        <dbReference type="Rhea" id="RHEA-COMP:9584"/>
        <dbReference type="Rhea" id="RHEA-COMP:9587"/>
        <dbReference type="ChEBI" id="CHEBI:15378"/>
        <dbReference type="ChEBI" id="CHEBI:15444"/>
        <dbReference type="ChEBI" id="CHEBI:57498"/>
        <dbReference type="ChEBI" id="CHEBI:456216"/>
        <dbReference type="EC" id="2.4.1.21"/>
    </reaction>
</comment>
<comment type="pathway">
    <text evidence="1">Glycan biosynthesis; glycogen biosynthesis.</text>
</comment>
<comment type="similarity">
    <text evidence="1">Belongs to the glycosyltransferase 1 family. Bacterial/plant glycogen synthase subfamily.</text>
</comment>